<accession>A8A539</accession>
<dbReference type="EMBL" id="CP000802">
    <property type="protein sequence ID" value="ABV07643.1"/>
    <property type="molecule type" value="Genomic_DNA"/>
</dbReference>
<dbReference type="RefSeq" id="WP_000829818.1">
    <property type="nucleotide sequence ID" value="NC_009800.1"/>
</dbReference>
<dbReference type="SMR" id="A8A539"/>
<dbReference type="GeneID" id="98390344"/>
<dbReference type="KEGG" id="ecx:EcHS_A3419"/>
<dbReference type="HOGENOM" id="CLU_046483_2_1_6"/>
<dbReference type="GO" id="GO:0022627">
    <property type="term" value="C:cytosolic small ribosomal subunit"/>
    <property type="evidence" value="ECO:0007669"/>
    <property type="project" value="TreeGrafter"/>
</dbReference>
<dbReference type="GO" id="GO:0003723">
    <property type="term" value="F:RNA binding"/>
    <property type="evidence" value="ECO:0007669"/>
    <property type="project" value="TreeGrafter"/>
</dbReference>
<dbReference type="GO" id="GO:0003735">
    <property type="term" value="F:structural constituent of ribosome"/>
    <property type="evidence" value="ECO:0007669"/>
    <property type="project" value="InterPro"/>
</dbReference>
<dbReference type="GO" id="GO:0006412">
    <property type="term" value="P:translation"/>
    <property type="evidence" value="ECO:0007669"/>
    <property type="project" value="UniProtKB-UniRule"/>
</dbReference>
<dbReference type="FunFam" id="3.30.230.10:FF:000001">
    <property type="entry name" value="30S ribosomal protein S9"/>
    <property type="match status" value="1"/>
</dbReference>
<dbReference type="Gene3D" id="3.30.230.10">
    <property type="match status" value="1"/>
</dbReference>
<dbReference type="HAMAP" id="MF_00532_B">
    <property type="entry name" value="Ribosomal_uS9_B"/>
    <property type="match status" value="1"/>
</dbReference>
<dbReference type="InterPro" id="IPR020568">
    <property type="entry name" value="Ribosomal_Su5_D2-typ_SF"/>
</dbReference>
<dbReference type="InterPro" id="IPR000754">
    <property type="entry name" value="Ribosomal_uS9"/>
</dbReference>
<dbReference type="InterPro" id="IPR023035">
    <property type="entry name" value="Ribosomal_uS9_bac/plastid"/>
</dbReference>
<dbReference type="InterPro" id="IPR020574">
    <property type="entry name" value="Ribosomal_uS9_CS"/>
</dbReference>
<dbReference type="InterPro" id="IPR014721">
    <property type="entry name" value="Ribsml_uS5_D2-typ_fold_subgr"/>
</dbReference>
<dbReference type="NCBIfam" id="NF001099">
    <property type="entry name" value="PRK00132.1"/>
    <property type="match status" value="1"/>
</dbReference>
<dbReference type="PANTHER" id="PTHR21569">
    <property type="entry name" value="RIBOSOMAL PROTEIN S9"/>
    <property type="match status" value="1"/>
</dbReference>
<dbReference type="PANTHER" id="PTHR21569:SF1">
    <property type="entry name" value="SMALL RIBOSOMAL SUBUNIT PROTEIN US9M"/>
    <property type="match status" value="1"/>
</dbReference>
<dbReference type="Pfam" id="PF00380">
    <property type="entry name" value="Ribosomal_S9"/>
    <property type="match status" value="1"/>
</dbReference>
<dbReference type="SUPFAM" id="SSF54211">
    <property type="entry name" value="Ribosomal protein S5 domain 2-like"/>
    <property type="match status" value="1"/>
</dbReference>
<dbReference type="PROSITE" id="PS00360">
    <property type="entry name" value="RIBOSOMAL_S9"/>
    <property type="match status" value="1"/>
</dbReference>
<feature type="chain" id="PRO_1000061002" description="Small ribosomal subunit protein uS9">
    <location>
        <begin position="1"/>
        <end position="130"/>
    </location>
</feature>
<proteinExistence type="inferred from homology"/>
<keyword id="KW-0687">Ribonucleoprotein</keyword>
<keyword id="KW-0689">Ribosomal protein</keyword>
<sequence>MAENQYYGTGRRKSSAARVFIKPGNGKIVINQRSLEQYFGRETARMVVRQPLELVDMVEKLDLYITVKGGGISGQAGAIRHGITRALMEYDESLRSELRKAGFVTRDARQVERKKVGLRKARRRPQFSKR</sequence>
<gene>
    <name evidence="1" type="primary">rpsI</name>
    <name type="ordered locus">EcHS_A3419</name>
</gene>
<protein>
    <recommendedName>
        <fullName evidence="1">Small ribosomal subunit protein uS9</fullName>
    </recommendedName>
    <alternativeName>
        <fullName evidence="2">30S ribosomal protein S9</fullName>
    </alternativeName>
</protein>
<comment type="similarity">
    <text evidence="1">Belongs to the universal ribosomal protein uS9 family.</text>
</comment>
<organism>
    <name type="scientific">Escherichia coli O9:H4 (strain HS)</name>
    <dbReference type="NCBI Taxonomy" id="331112"/>
    <lineage>
        <taxon>Bacteria</taxon>
        <taxon>Pseudomonadati</taxon>
        <taxon>Pseudomonadota</taxon>
        <taxon>Gammaproteobacteria</taxon>
        <taxon>Enterobacterales</taxon>
        <taxon>Enterobacteriaceae</taxon>
        <taxon>Escherichia</taxon>
    </lineage>
</organism>
<evidence type="ECO:0000255" key="1">
    <source>
        <dbReference type="HAMAP-Rule" id="MF_00532"/>
    </source>
</evidence>
<evidence type="ECO:0000305" key="2"/>
<reference key="1">
    <citation type="journal article" date="2008" name="J. Bacteriol.">
        <title>The pangenome structure of Escherichia coli: comparative genomic analysis of E. coli commensal and pathogenic isolates.</title>
        <authorList>
            <person name="Rasko D.A."/>
            <person name="Rosovitz M.J."/>
            <person name="Myers G.S.A."/>
            <person name="Mongodin E.F."/>
            <person name="Fricke W.F."/>
            <person name="Gajer P."/>
            <person name="Crabtree J."/>
            <person name="Sebaihia M."/>
            <person name="Thomson N.R."/>
            <person name="Chaudhuri R."/>
            <person name="Henderson I.R."/>
            <person name="Sperandio V."/>
            <person name="Ravel J."/>
        </authorList>
    </citation>
    <scope>NUCLEOTIDE SEQUENCE [LARGE SCALE GENOMIC DNA]</scope>
    <source>
        <strain>HS</strain>
    </source>
</reference>
<name>RS9_ECOHS</name>